<protein>
    <recommendedName>
        <fullName>Type-1 angiotensin II receptor-associated protein</fullName>
    </recommendedName>
    <alternativeName>
        <fullName>AT1 receptor-associated protein</fullName>
    </alternativeName>
</protein>
<dbReference type="EMBL" id="BC082019">
    <property type="protein sequence ID" value="AAH82019.1"/>
    <property type="molecule type" value="mRNA"/>
</dbReference>
<dbReference type="RefSeq" id="NP_001007655.1">
    <property type="nucleotide sequence ID" value="NM_001007654.1"/>
</dbReference>
<dbReference type="FunCoup" id="Q642A2">
    <property type="interactions" value="500"/>
</dbReference>
<dbReference type="STRING" id="10116.ENSRNOP00000011747"/>
<dbReference type="PhosphoSitePlus" id="Q642A2"/>
<dbReference type="PaxDb" id="10116-ENSRNOP00000011747"/>
<dbReference type="Ensembl" id="ENSRNOT00000011747.7">
    <property type="protein sequence ID" value="ENSRNOP00000011747.3"/>
    <property type="gene ID" value="ENSRNOG00000008619.7"/>
</dbReference>
<dbReference type="GeneID" id="298646"/>
<dbReference type="KEGG" id="rno:298646"/>
<dbReference type="AGR" id="RGD:1359346"/>
<dbReference type="CTD" id="57085"/>
<dbReference type="RGD" id="1359346">
    <property type="gene designation" value="Agtrap"/>
</dbReference>
<dbReference type="eggNOG" id="ENOG502S36M">
    <property type="taxonomic scope" value="Eukaryota"/>
</dbReference>
<dbReference type="GeneTree" id="ENSGT00390000017402"/>
<dbReference type="HOGENOM" id="CLU_126745_0_0_1"/>
<dbReference type="InParanoid" id="Q642A2"/>
<dbReference type="OMA" id="IMNGWAV"/>
<dbReference type="OrthoDB" id="8191171at2759"/>
<dbReference type="PhylomeDB" id="Q642A2"/>
<dbReference type="TreeFam" id="TF324477"/>
<dbReference type="PRO" id="PR:Q642A2"/>
<dbReference type="Proteomes" id="UP000002494">
    <property type="component" value="Chromosome 5"/>
</dbReference>
<dbReference type="Bgee" id="ENSRNOG00000008619">
    <property type="expression patterns" value="Expressed in adult mammalian kidney and 19 other cell types or tissues"/>
</dbReference>
<dbReference type="GO" id="GO:0005938">
    <property type="term" value="C:cell cortex"/>
    <property type="evidence" value="ECO:0000266"/>
    <property type="project" value="RGD"/>
</dbReference>
<dbReference type="GO" id="GO:0030659">
    <property type="term" value="C:cytoplasmic vesicle membrane"/>
    <property type="evidence" value="ECO:0007669"/>
    <property type="project" value="UniProtKB-SubCell"/>
</dbReference>
<dbReference type="GO" id="GO:0005789">
    <property type="term" value="C:endoplasmic reticulum membrane"/>
    <property type="evidence" value="ECO:0007669"/>
    <property type="project" value="UniProtKB-SubCell"/>
</dbReference>
<dbReference type="GO" id="GO:0000139">
    <property type="term" value="C:Golgi membrane"/>
    <property type="evidence" value="ECO:0007669"/>
    <property type="project" value="UniProtKB-SubCell"/>
</dbReference>
<dbReference type="GO" id="GO:0005886">
    <property type="term" value="C:plasma membrane"/>
    <property type="evidence" value="ECO:0000266"/>
    <property type="project" value="RGD"/>
</dbReference>
<dbReference type="GO" id="GO:0004945">
    <property type="term" value="F:angiotensin type II receptor activity"/>
    <property type="evidence" value="ECO:0000266"/>
    <property type="project" value="RGD"/>
</dbReference>
<dbReference type="GO" id="GO:0008217">
    <property type="term" value="P:regulation of blood pressure"/>
    <property type="evidence" value="ECO:0000266"/>
    <property type="project" value="RGD"/>
</dbReference>
<dbReference type="GO" id="GO:0001666">
    <property type="term" value="P:response to hypoxia"/>
    <property type="evidence" value="ECO:0000270"/>
    <property type="project" value="RGD"/>
</dbReference>
<dbReference type="InterPro" id="IPR009436">
    <property type="entry name" value="AGTRAP"/>
</dbReference>
<dbReference type="PANTHER" id="PTHR16521">
    <property type="entry name" value="TYPE-1 ANGIOTENSIN II RECEPTOR-ASSOCIATED PROTEIN"/>
    <property type="match status" value="1"/>
</dbReference>
<dbReference type="PANTHER" id="PTHR16521:SF3">
    <property type="entry name" value="TYPE-1 ANGIOTENSIN II RECEPTOR-ASSOCIATED PROTEIN"/>
    <property type="match status" value="1"/>
</dbReference>
<dbReference type="Pfam" id="PF06396">
    <property type="entry name" value="AGTRAP"/>
    <property type="match status" value="1"/>
</dbReference>
<dbReference type="SMART" id="SM00805">
    <property type="entry name" value="AGTRAP"/>
    <property type="match status" value="1"/>
</dbReference>
<evidence type="ECO:0000250" key="1"/>
<evidence type="ECO:0000250" key="2">
    <source>
        <dbReference type="UniProtKB" id="Q6RW13"/>
    </source>
</evidence>
<evidence type="ECO:0000255" key="3"/>
<evidence type="ECO:0000256" key="4">
    <source>
        <dbReference type="SAM" id="MobiDB-lite"/>
    </source>
</evidence>
<evidence type="ECO:0000269" key="5">
    <source>
    </source>
</evidence>
<keyword id="KW-0968">Cytoplasmic vesicle</keyword>
<keyword id="KW-0256">Endoplasmic reticulum</keyword>
<keyword id="KW-0333">Golgi apparatus</keyword>
<keyword id="KW-0472">Membrane</keyword>
<keyword id="KW-0597">Phosphoprotein</keyword>
<keyword id="KW-1185">Reference proteome</keyword>
<keyword id="KW-0812">Transmembrane</keyword>
<keyword id="KW-1133">Transmembrane helix</keyword>
<gene>
    <name type="primary">Agtrap</name>
    <name type="synonym">Atrap</name>
</gene>
<name>ATRAP_RAT</name>
<proteinExistence type="evidence at protein level"/>
<reference key="1">
    <citation type="journal article" date="2004" name="Genome Res.">
        <title>The status, quality, and expansion of the NIH full-length cDNA project: the Mammalian Gene Collection (MGC).</title>
        <authorList>
            <consortium name="The MGC Project Team"/>
        </authorList>
    </citation>
    <scope>NUCLEOTIDE SEQUENCE [LARGE SCALE MRNA]</scope>
    <source>
        <tissue>Kidney</tissue>
    </source>
</reference>
<reference key="2">
    <citation type="journal article" date="2000" name="Biochem. Biophys. Res. Commun.">
        <title>ATRAP, novel AT1 receptor associated protein, enhances internalization of AT1 receptor and inhibits vascular smooth muscle cell growth.</title>
        <authorList>
            <person name="Cui T."/>
            <person name="Nakagami H."/>
            <person name="Iwai M."/>
            <person name="Takeda Y."/>
            <person name="Shiuchi T."/>
            <person name="Tamura K."/>
            <person name="Daviet L."/>
            <person name="Horiuchi M."/>
        </authorList>
    </citation>
    <scope>FUNCTION</scope>
</reference>
<reference key="3">
    <citation type="journal article" date="2012" name="Nat. Commun.">
        <title>Quantitative maps of protein phosphorylation sites across 14 different rat organs and tissues.</title>
        <authorList>
            <person name="Lundby A."/>
            <person name="Secher A."/>
            <person name="Lage K."/>
            <person name="Nordsborg N.B."/>
            <person name="Dmytriyev A."/>
            <person name="Lundby C."/>
            <person name="Olsen J.V."/>
        </authorList>
    </citation>
    <scope>IDENTIFICATION BY MASS SPECTROMETRY [LARGE SCALE ANALYSIS]</scope>
</reference>
<sequence>MELPAVNLKVILLVHWLLTTWGCLAFSGSYAWGNFTILALGVWAVAQRDSVDAIGMFLGGLVATIFLDIIYISIFYSSVAVGDTGRFSAGMAIFSLLLKPFSCCLVYHMHRERGGELPLRSDFFGPSQEHSAYQTIDSSDSPADPLASLENKGQAAPRGY</sequence>
<organism>
    <name type="scientific">Rattus norvegicus</name>
    <name type="common">Rat</name>
    <dbReference type="NCBI Taxonomy" id="10116"/>
    <lineage>
        <taxon>Eukaryota</taxon>
        <taxon>Metazoa</taxon>
        <taxon>Chordata</taxon>
        <taxon>Craniata</taxon>
        <taxon>Vertebrata</taxon>
        <taxon>Euteleostomi</taxon>
        <taxon>Mammalia</taxon>
        <taxon>Eutheria</taxon>
        <taxon>Euarchontoglires</taxon>
        <taxon>Glires</taxon>
        <taxon>Rodentia</taxon>
        <taxon>Myomorpha</taxon>
        <taxon>Muroidea</taxon>
        <taxon>Muridae</taxon>
        <taxon>Murinae</taxon>
        <taxon>Rattus</taxon>
    </lineage>
</organism>
<accession>Q642A2</accession>
<feature type="chain" id="PRO_0000064738" description="Type-1 angiotensin II receptor-associated protein">
    <location>
        <begin position="1"/>
        <end position="160"/>
    </location>
</feature>
<feature type="topological domain" description="Extracellular" evidence="3">
    <location>
        <begin position="1"/>
        <end position="9"/>
    </location>
</feature>
<feature type="transmembrane region" description="Helical" evidence="3">
    <location>
        <begin position="10"/>
        <end position="30"/>
    </location>
</feature>
<feature type="topological domain" description="Cytoplasmic" evidence="3">
    <location>
        <begin position="31"/>
        <end position="53"/>
    </location>
</feature>
<feature type="transmembrane region" description="Helical" evidence="3">
    <location>
        <begin position="54"/>
        <end position="74"/>
    </location>
</feature>
<feature type="topological domain" description="Extracellular" evidence="3">
    <location>
        <begin position="75"/>
        <end position="86"/>
    </location>
</feature>
<feature type="transmembrane region" description="Helical" evidence="3">
    <location>
        <begin position="87"/>
        <end position="107"/>
    </location>
</feature>
<feature type="topological domain" description="Cytoplasmic" evidence="3">
    <location>
        <begin position="108"/>
        <end position="160"/>
    </location>
</feature>
<feature type="region of interest" description="Interaction with AGTR1" evidence="1">
    <location>
        <begin position="110"/>
        <end position="122"/>
    </location>
</feature>
<feature type="region of interest" description="Disordered" evidence="4">
    <location>
        <begin position="128"/>
        <end position="160"/>
    </location>
</feature>
<feature type="compositionally biased region" description="Low complexity" evidence="4">
    <location>
        <begin position="137"/>
        <end position="149"/>
    </location>
</feature>
<feature type="modified residue" description="Phosphoserine" evidence="2">
    <location>
        <position position="127"/>
    </location>
</feature>
<feature type="modified residue" description="Phosphothreonine" evidence="2">
    <location>
        <position position="135"/>
    </location>
</feature>
<feature type="modified residue" description="Phosphoserine" evidence="2">
    <location>
        <position position="138"/>
    </location>
</feature>
<comment type="function">
    <text evidence="5">Appears to be a negative regulator of type-1 angiotensin II receptor-mediated signaling by regulating receptor internalization as well as mechanism of receptor desensitization such as phosphorylation. May play a role of negative regulator in cardiomyocyte hypertrophy induced by angiotensin II through an inhibition of p38 mitogen-activated protein kinase pathway. Attenuates type-1 angiotensin II receptor growth promoting effect and angiotensin II-induced phosphorylation of protein kinase AKT and of STAT3.</text>
</comment>
<comment type="subunit">
    <text evidence="1">Interacts with RACK1, and with the carboxy-terminal region of AGTR1.</text>
</comment>
<comment type="subcellular location">
    <subcellularLocation>
        <location evidence="1">Endoplasmic reticulum membrane</location>
        <topology evidence="1">Multi-pass membrane protein</topology>
    </subcellularLocation>
    <subcellularLocation>
        <location evidence="1">Golgi apparatus membrane</location>
        <topology evidence="1">Multi-pass membrane protein</topology>
    </subcellularLocation>
    <subcellularLocation>
        <location evidence="1">Cytoplasmic vesicle membrane</location>
        <topology evidence="1">Multi-pass membrane protein</topology>
    </subcellularLocation>
    <text evidence="1">Present in perinuclear vesicular membranes, Endoplasmic reticulum, Golgi and endocytic vesicles.</text>
</comment>